<comment type="function">
    <text evidence="1">Involved in protein export. Acts as a chaperone by maintaining the newly synthesized protein in an open conformation. Functions as a peptidyl-prolyl cis-trans isomerase.</text>
</comment>
<comment type="catalytic activity">
    <reaction evidence="1">
        <text>[protein]-peptidylproline (omega=180) = [protein]-peptidylproline (omega=0)</text>
        <dbReference type="Rhea" id="RHEA:16237"/>
        <dbReference type="Rhea" id="RHEA-COMP:10747"/>
        <dbReference type="Rhea" id="RHEA-COMP:10748"/>
        <dbReference type="ChEBI" id="CHEBI:83833"/>
        <dbReference type="ChEBI" id="CHEBI:83834"/>
        <dbReference type="EC" id="5.2.1.8"/>
    </reaction>
</comment>
<comment type="subcellular location">
    <subcellularLocation>
        <location>Cytoplasm</location>
    </subcellularLocation>
    <text evidence="1">About half TF is bound to the ribosome near the polypeptide exit tunnel while the other half is free in the cytoplasm.</text>
</comment>
<comment type="domain">
    <text evidence="1">Consists of 3 domains; the N-terminus binds the ribosome, the middle domain has PPIase activity, while the C-terminus has intrinsic chaperone activity on its own.</text>
</comment>
<comment type="similarity">
    <text evidence="1">Belongs to the FKBP-type PPIase family. Tig subfamily.</text>
</comment>
<name>TIG_LEPIC</name>
<gene>
    <name evidence="1" type="primary">tig</name>
    <name type="ordered locus">LIC_11416</name>
</gene>
<proteinExistence type="inferred from homology"/>
<keyword id="KW-0131">Cell cycle</keyword>
<keyword id="KW-0132">Cell division</keyword>
<keyword id="KW-0143">Chaperone</keyword>
<keyword id="KW-0963">Cytoplasm</keyword>
<keyword id="KW-0413">Isomerase</keyword>
<keyword id="KW-0697">Rotamase</keyword>
<feature type="chain" id="PRO_0000179373" description="Trigger factor">
    <location>
        <begin position="1"/>
        <end position="451"/>
    </location>
</feature>
<feature type="domain" description="PPIase FKBP-type" evidence="1">
    <location>
        <begin position="163"/>
        <end position="248"/>
    </location>
</feature>
<sequence>MDYKTKKNSNATVDIKLTFEASDIEKAFDKTYEEKQKNVKIPGFRPGKAPLNMVKRHLGDSVASDAINTLIVDGMTSILSKLEHPMIRFPKFEIQDYQPGKNLIATAIYETNPEITLGKYKKIKIKLPEVSVSDLDVSEEVEKVRKNLARKQLKEEGQAAVAGDIIDMEYTVCEKGQESKNSGNTSNDYHLGHENNLKGFDENLYGMKSGEKKDFVHTFPEDYSQNEVAGKTFEYSVTIKALYANILPAVDDDLASEFDGSESLNVLKDKIRKNLKEGFEDRVKNKKLDEIYKEIIDDSKYVFPESYLREESEHVFHNMIHEFKLPHMTMEKYANMVQKDLKEVQESFQKLAETRLKHYFTRQKIAEIENISYSEQDFDADLEKLASSYQISLSDLKKELEKGKLMEQYRENFFAKKIDNILFDLVEKKYTDKLNIGQIKDYLNQKEEVKA</sequence>
<reference key="1">
    <citation type="journal article" date="2004" name="J. Bacteriol.">
        <title>Comparative genomics of two Leptospira interrogans serovars reveals novel insights into physiology and pathogenesis.</title>
        <authorList>
            <person name="Nascimento A.L.T.O."/>
            <person name="Ko A.I."/>
            <person name="Martins E.A.L."/>
            <person name="Monteiro-Vitorello C.B."/>
            <person name="Ho P.L."/>
            <person name="Haake D.A."/>
            <person name="Verjovski-Almeida S."/>
            <person name="Hartskeerl R.A."/>
            <person name="Marques M.V."/>
            <person name="Oliveira M.C."/>
            <person name="Menck C.F.M."/>
            <person name="Leite L.C.C."/>
            <person name="Carrer H."/>
            <person name="Coutinho L.L."/>
            <person name="Degrave W.M."/>
            <person name="Dellagostin O.A."/>
            <person name="El-Dorry H."/>
            <person name="Ferro E.S."/>
            <person name="Ferro M.I.T."/>
            <person name="Furlan L.R."/>
            <person name="Gamberini M."/>
            <person name="Giglioti E.A."/>
            <person name="Goes-Neto A."/>
            <person name="Goldman G.H."/>
            <person name="Goldman M.H.S."/>
            <person name="Harakava R."/>
            <person name="Jeronimo S.M.B."/>
            <person name="Junqueira-de-Azevedo I.L.M."/>
            <person name="Kimura E.T."/>
            <person name="Kuramae E.E."/>
            <person name="Lemos E.G.M."/>
            <person name="Lemos M.V.F."/>
            <person name="Marino C.L."/>
            <person name="Nunes L.R."/>
            <person name="de Oliveira R.C."/>
            <person name="Pereira G.G."/>
            <person name="Reis M.S."/>
            <person name="Schriefer A."/>
            <person name="Siqueira W.J."/>
            <person name="Sommer P."/>
            <person name="Tsai S.M."/>
            <person name="Simpson A.J.G."/>
            <person name="Ferro J.A."/>
            <person name="Camargo L.E.A."/>
            <person name="Kitajima J.P."/>
            <person name="Setubal J.C."/>
            <person name="Van Sluys M.A."/>
        </authorList>
    </citation>
    <scope>NUCLEOTIDE SEQUENCE [LARGE SCALE GENOMIC DNA]</scope>
    <source>
        <strain>Fiocruz L1-130</strain>
    </source>
</reference>
<organism>
    <name type="scientific">Leptospira interrogans serogroup Icterohaemorrhagiae serovar copenhageni (strain Fiocruz L1-130)</name>
    <dbReference type="NCBI Taxonomy" id="267671"/>
    <lineage>
        <taxon>Bacteria</taxon>
        <taxon>Pseudomonadati</taxon>
        <taxon>Spirochaetota</taxon>
        <taxon>Spirochaetia</taxon>
        <taxon>Leptospirales</taxon>
        <taxon>Leptospiraceae</taxon>
        <taxon>Leptospira</taxon>
    </lineage>
</organism>
<evidence type="ECO:0000255" key="1">
    <source>
        <dbReference type="HAMAP-Rule" id="MF_00303"/>
    </source>
</evidence>
<accession>Q72SG7</accession>
<protein>
    <recommendedName>
        <fullName evidence="1">Trigger factor</fullName>
        <shortName evidence="1">TF</shortName>
        <ecNumber evidence="1">5.2.1.8</ecNumber>
    </recommendedName>
    <alternativeName>
        <fullName evidence="1">PPIase</fullName>
    </alternativeName>
</protein>
<dbReference type="EC" id="5.2.1.8" evidence="1"/>
<dbReference type="EMBL" id="AE016823">
    <property type="protein sequence ID" value="AAS70015.1"/>
    <property type="molecule type" value="Genomic_DNA"/>
</dbReference>
<dbReference type="RefSeq" id="WP_000384982.1">
    <property type="nucleotide sequence ID" value="NC_005823.1"/>
</dbReference>
<dbReference type="SMR" id="Q72SG7"/>
<dbReference type="GeneID" id="61144719"/>
<dbReference type="KEGG" id="lic:LIC_11416"/>
<dbReference type="HOGENOM" id="CLU_033058_3_2_12"/>
<dbReference type="Proteomes" id="UP000007037">
    <property type="component" value="Chromosome I"/>
</dbReference>
<dbReference type="GO" id="GO:0005737">
    <property type="term" value="C:cytoplasm"/>
    <property type="evidence" value="ECO:0007669"/>
    <property type="project" value="UniProtKB-SubCell"/>
</dbReference>
<dbReference type="GO" id="GO:0003755">
    <property type="term" value="F:peptidyl-prolyl cis-trans isomerase activity"/>
    <property type="evidence" value="ECO:0007669"/>
    <property type="project" value="UniProtKB-UniRule"/>
</dbReference>
<dbReference type="GO" id="GO:0044183">
    <property type="term" value="F:protein folding chaperone"/>
    <property type="evidence" value="ECO:0007669"/>
    <property type="project" value="TreeGrafter"/>
</dbReference>
<dbReference type="GO" id="GO:0043022">
    <property type="term" value="F:ribosome binding"/>
    <property type="evidence" value="ECO:0007669"/>
    <property type="project" value="TreeGrafter"/>
</dbReference>
<dbReference type="GO" id="GO:0051083">
    <property type="term" value="P:'de novo' cotranslational protein folding"/>
    <property type="evidence" value="ECO:0007669"/>
    <property type="project" value="TreeGrafter"/>
</dbReference>
<dbReference type="GO" id="GO:0051301">
    <property type="term" value="P:cell division"/>
    <property type="evidence" value="ECO:0007669"/>
    <property type="project" value="UniProtKB-KW"/>
</dbReference>
<dbReference type="GO" id="GO:0061077">
    <property type="term" value="P:chaperone-mediated protein folding"/>
    <property type="evidence" value="ECO:0007669"/>
    <property type="project" value="TreeGrafter"/>
</dbReference>
<dbReference type="GO" id="GO:0015031">
    <property type="term" value="P:protein transport"/>
    <property type="evidence" value="ECO:0007669"/>
    <property type="project" value="UniProtKB-UniRule"/>
</dbReference>
<dbReference type="GO" id="GO:0043335">
    <property type="term" value="P:protein unfolding"/>
    <property type="evidence" value="ECO:0007669"/>
    <property type="project" value="TreeGrafter"/>
</dbReference>
<dbReference type="FunFam" id="3.30.70.1050:FF:000008">
    <property type="entry name" value="Trigger factor"/>
    <property type="match status" value="1"/>
</dbReference>
<dbReference type="Gene3D" id="3.10.50.40">
    <property type="match status" value="1"/>
</dbReference>
<dbReference type="Gene3D" id="3.30.70.1050">
    <property type="entry name" value="Trigger factor ribosome-binding domain"/>
    <property type="match status" value="1"/>
</dbReference>
<dbReference type="Gene3D" id="1.10.3120.10">
    <property type="entry name" value="Trigger factor, C-terminal domain"/>
    <property type="match status" value="1"/>
</dbReference>
<dbReference type="HAMAP" id="MF_00303">
    <property type="entry name" value="Trigger_factor_Tig"/>
    <property type="match status" value="1"/>
</dbReference>
<dbReference type="InterPro" id="IPR046357">
    <property type="entry name" value="PPIase_dom_sf"/>
</dbReference>
<dbReference type="InterPro" id="IPR001179">
    <property type="entry name" value="PPIase_FKBP_dom"/>
</dbReference>
<dbReference type="InterPro" id="IPR005215">
    <property type="entry name" value="Trig_fac"/>
</dbReference>
<dbReference type="InterPro" id="IPR008880">
    <property type="entry name" value="Trigger_fac_C"/>
</dbReference>
<dbReference type="InterPro" id="IPR037041">
    <property type="entry name" value="Trigger_fac_C_sf"/>
</dbReference>
<dbReference type="InterPro" id="IPR008881">
    <property type="entry name" value="Trigger_fac_ribosome-bd_bac"/>
</dbReference>
<dbReference type="InterPro" id="IPR036611">
    <property type="entry name" value="Trigger_fac_ribosome-bd_sf"/>
</dbReference>
<dbReference type="InterPro" id="IPR027304">
    <property type="entry name" value="Trigger_fact/SurA_dom_sf"/>
</dbReference>
<dbReference type="NCBIfam" id="TIGR00115">
    <property type="entry name" value="tig"/>
    <property type="match status" value="1"/>
</dbReference>
<dbReference type="PANTHER" id="PTHR30560">
    <property type="entry name" value="TRIGGER FACTOR CHAPERONE AND PEPTIDYL-PROLYL CIS/TRANS ISOMERASE"/>
    <property type="match status" value="1"/>
</dbReference>
<dbReference type="PANTHER" id="PTHR30560:SF3">
    <property type="entry name" value="TRIGGER FACTOR-LIKE PROTEIN TIG, CHLOROPLASTIC"/>
    <property type="match status" value="1"/>
</dbReference>
<dbReference type="Pfam" id="PF00254">
    <property type="entry name" value="FKBP_C"/>
    <property type="match status" value="1"/>
</dbReference>
<dbReference type="Pfam" id="PF05698">
    <property type="entry name" value="Trigger_C"/>
    <property type="match status" value="1"/>
</dbReference>
<dbReference type="Pfam" id="PF05697">
    <property type="entry name" value="Trigger_N"/>
    <property type="match status" value="1"/>
</dbReference>
<dbReference type="PIRSF" id="PIRSF003095">
    <property type="entry name" value="Trigger_factor"/>
    <property type="match status" value="1"/>
</dbReference>
<dbReference type="SUPFAM" id="SSF54534">
    <property type="entry name" value="FKBP-like"/>
    <property type="match status" value="1"/>
</dbReference>
<dbReference type="SUPFAM" id="SSF109998">
    <property type="entry name" value="Triger factor/SurA peptide-binding domain-like"/>
    <property type="match status" value="1"/>
</dbReference>
<dbReference type="SUPFAM" id="SSF102735">
    <property type="entry name" value="Trigger factor ribosome-binding domain"/>
    <property type="match status" value="1"/>
</dbReference>